<reference key="1">
    <citation type="journal article" date="2001" name="FEMS Microbiol. Lett.">
        <title>The Lly protein is essential for p-hydroxyphenylpyruvate dioxygenase activity in Legionella pneumophila.</title>
        <authorList>
            <person name="Steinert M."/>
            <person name="Flugel M."/>
            <person name="Schuppler M."/>
            <person name="Helbig J.H."/>
            <person name="Supriyono A."/>
            <person name="Proksch P."/>
            <person name="Lueck P.C."/>
        </authorList>
    </citation>
    <scope>NUCLEOTIDE SEQUENCE [GENOMIC DNA]</scope>
    <scope>FUNCTION</scope>
</reference>
<reference key="2">
    <citation type="submission" date="2006-11" db="EMBL/GenBank/DDBJ databases">
        <title>Identification and characterization of a new conjugation/ type IVA secretion system (trb/tra) of L. pneumophila Corby localized on a mobile genomic island.</title>
        <authorList>
            <person name="Gloeckner G."/>
            <person name="Albert-Weissenberger C."/>
            <person name="Weinmann E."/>
            <person name="Jacobi S."/>
            <person name="Schunder E."/>
            <person name="Steinert M."/>
            <person name="Buchrieser C."/>
            <person name="Hacker J."/>
            <person name="Heuner K."/>
        </authorList>
    </citation>
    <scope>NUCLEOTIDE SEQUENCE [LARGE SCALE GENOMIC DNA]</scope>
    <source>
        <strain>Corby</strain>
    </source>
</reference>
<name>LLY_LEGPC</name>
<keyword id="KW-0204">Cytolysis</keyword>
<keyword id="KW-0223">Dioxygenase</keyword>
<keyword id="KW-0354">Hemolysis</keyword>
<keyword id="KW-0408">Iron</keyword>
<keyword id="KW-0479">Metal-binding</keyword>
<keyword id="KW-0560">Oxidoreductase</keyword>
<keyword id="KW-0677">Repeat</keyword>
<keyword id="KW-0800">Toxin</keyword>
<keyword id="KW-0843">Virulence</keyword>
<dbReference type="EC" id="1.13.11.27"/>
<dbReference type="EMBL" id="AJ001357">
    <property type="protein sequence ID" value="CAA04693.1"/>
    <property type="molecule type" value="Genomic_DNA"/>
</dbReference>
<dbReference type="EMBL" id="CP000675">
    <property type="protein sequence ID" value="ABQ55683.1"/>
    <property type="molecule type" value="Genomic_DNA"/>
</dbReference>
<dbReference type="SMR" id="P69053"/>
<dbReference type="KEGG" id="lpc:LPC_1747"/>
<dbReference type="HOGENOM" id="CLU_034004_1_0_6"/>
<dbReference type="GO" id="GO:0003868">
    <property type="term" value="F:4-hydroxyphenylpyruvate dioxygenase activity"/>
    <property type="evidence" value="ECO:0007669"/>
    <property type="project" value="UniProtKB-EC"/>
</dbReference>
<dbReference type="GO" id="GO:0046872">
    <property type="term" value="F:metal ion binding"/>
    <property type="evidence" value="ECO:0007669"/>
    <property type="project" value="UniProtKB-KW"/>
</dbReference>
<dbReference type="GO" id="GO:0090729">
    <property type="term" value="F:toxin activity"/>
    <property type="evidence" value="ECO:0007669"/>
    <property type="project" value="UniProtKB-KW"/>
</dbReference>
<dbReference type="GO" id="GO:0031640">
    <property type="term" value="P:killing of cells of another organism"/>
    <property type="evidence" value="ECO:0007669"/>
    <property type="project" value="UniProtKB-KW"/>
</dbReference>
<dbReference type="GO" id="GO:0006572">
    <property type="term" value="P:tyrosine catabolic process"/>
    <property type="evidence" value="ECO:0007669"/>
    <property type="project" value="TreeGrafter"/>
</dbReference>
<dbReference type="CDD" id="cd07250">
    <property type="entry name" value="HPPD_C_like"/>
    <property type="match status" value="1"/>
</dbReference>
<dbReference type="CDD" id="cd08342">
    <property type="entry name" value="HPPD_N_like"/>
    <property type="match status" value="1"/>
</dbReference>
<dbReference type="FunFam" id="3.10.180.10:FF:000007">
    <property type="entry name" value="4-hydroxyphenylpyruvate dioxygenase"/>
    <property type="match status" value="1"/>
</dbReference>
<dbReference type="Gene3D" id="3.10.180.10">
    <property type="entry name" value="2,3-Dihydroxybiphenyl 1,2-Dioxygenase, domain 1"/>
    <property type="match status" value="2"/>
</dbReference>
<dbReference type="InterPro" id="IPR005956">
    <property type="entry name" value="4OHPhenylPyrv_dOase"/>
</dbReference>
<dbReference type="InterPro" id="IPR041735">
    <property type="entry name" value="4OHPhenylPyrv_dOase_C"/>
</dbReference>
<dbReference type="InterPro" id="IPR041736">
    <property type="entry name" value="4OHPhenylPyrv_dOase_N"/>
</dbReference>
<dbReference type="InterPro" id="IPR029068">
    <property type="entry name" value="Glyas_Bleomycin-R_OHBP_Dase"/>
</dbReference>
<dbReference type="InterPro" id="IPR004360">
    <property type="entry name" value="Glyas_Fos-R_dOase_dom"/>
</dbReference>
<dbReference type="InterPro" id="IPR037523">
    <property type="entry name" value="VOC"/>
</dbReference>
<dbReference type="NCBIfam" id="TIGR01263">
    <property type="entry name" value="4HPPD"/>
    <property type="match status" value="1"/>
</dbReference>
<dbReference type="PANTHER" id="PTHR11959">
    <property type="entry name" value="4-HYDROXYPHENYLPYRUVATE DIOXYGENASE"/>
    <property type="match status" value="1"/>
</dbReference>
<dbReference type="PANTHER" id="PTHR11959:SF1">
    <property type="entry name" value="4-HYDROXYPHENYLPYRUVATE DIOXYGENASE"/>
    <property type="match status" value="1"/>
</dbReference>
<dbReference type="Pfam" id="PF00903">
    <property type="entry name" value="Glyoxalase"/>
    <property type="match status" value="1"/>
</dbReference>
<dbReference type="Pfam" id="PF14696">
    <property type="entry name" value="Glyoxalase_5"/>
    <property type="match status" value="1"/>
</dbReference>
<dbReference type="PIRSF" id="PIRSF009283">
    <property type="entry name" value="HPP_dOase"/>
    <property type="match status" value="1"/>
</dbReference>
<dbReference type="SUPFAM" id="SSF54593">
    <property type="entry name" value="Glyoxalase/Bleomycin resistance protein/Dihydroxybiphenyl dioxygenase"/>
    <property type="match status" value="1"/>
</dbReference>
<dbReference type="PROSITE" id="PS51819">
    <property type="entry name" value="VOC"/>
    <property type="match status" value="2"/>
</dbReference>
<accession>P69053</accession>
<accession>A5IE83</accession>
<accession>Q53407</accession>
<sequence>MQNNNPCGLDGFAFLEFSGPDRNKLHQQFSEMGFQAVAHHKNQDITLFKQGEIQFIVNAASHCQAEAHASTHGPGACAMGFKVKDAKAAFQHAIAHGGIAFQDAPHANHGLPAIQAIGGSVIYFVDEEHQPFSHEWNITSSEPVVGNGLTAIDHLTHNVYRGNMDKWASFYASIFNFQEIRFFNIKGKMTGLVSRALGSPCGKIKIPLNESKDDLSQIEEFLHEYHGEGIQHIALNTNDIYKTVNGLRKQGVKFLDVPDTYYEMINDRLPWHKEPLNQLHAEKILIDGEADPKDGLLLQIFTENIFGPVFFEIIQRKGNQGFGEGNFQALFEAIERDQVRRGTLKELT</sequence>
<protein>
    <recommendedName>
        <fullName>4-hydroxyphenylpyruvate dioxygenase</fullName>
        <shortName>4HPPD</shortName>
        <shortName>HPD</shortName>
        <shortName>HPPDase</shortName>
        <ecNumber>1.13.11.27</ecNumber>
    </recommendedName>
    <alternativeName>
        <fullName>Legiolysin</fullName>
    </alternativeName>
</protein>
<comment type="function">
    <text evidence="3">Catalyzes the transformation of p-hydroxyphenylpyruvate into HGA. Has hemolytic and brown pigment production activity.</text>
</comment>
<comment type="catalytic activity">
    <reaction>
        <text>3-(4-hydroxyphenyl)pyruvate + O2 = homogentisate + CO2</text>
        <dbReference type="Rhea" id="RHEA:16189"/>
        <dbReference type="ChEBI" id="CHEBI:15379"/>
        <dbReference type="ChEBI" id="CHEBI:16169"/>
        <dbReference type="ChEBI" id="CHEBI:16526"/>
        <dbReference type="ChEBI" id="CHEBI:36242"/>
        <dbReference type="EC" id="1.13.11.27"/>
    </reaction>
</comment>
<comment type="cofactor">
    <cofactor evidence="1">
        <name>Fe cation</name>
        <dbReference type="ChEBI" id="CHEBI:24875"/>
    </cofactor>
    <text evidence="1">Binds 1 Fe cation per subunit.</text>
</comment>
<comment type="similarity">
    <text evidence="4">Belongs to the 4HPPD family.</text>
</comment>
<evidence type="ECO:0000250" key="1"/>
<evidence type="ECO:0000255" key="2">
    <source>
        <dbReference type="PROSITE-ProRule" id="PRU01163"/>
    </source>
</evidence>
<evidence type="ECO:0000269" key="3">
    <source>
    </source>
</evidence>
<evidence type="ECO:0000305" key="4"/>
<organism>
    <name type="scientific">Legionella pneumophila (strain Corby)</name>
    <dbReference type="NCBI Taxonomy" id="400673"/>
    <lineage>
        <taxon>Bacteria</taxon>
        <taxon>Pseudomonadati</taxon>
        <taxon>Pseudomonadota</taxon>
        <taxon>Gammaproteobacteria</taxon>
        <taxon>Legionellales</taxon>
        <taxon>Legionellaceae</taxon>
        <taxon>Legionella</taxon>
    </lineage>
</organism>
<feature type="chain" id="PRO_0000088413" description="4-hydroxyphenylpyruvate dioxygenase">
    <location>
        <begin position="1"/>
        <end position="348"/>
    </location>
</feature>
<feature type="domain" description="VOC 1" evidence="2">
    <location>
        <begin position="11"/>
        <end position="141"/>
    </location>
</feature>
<feature type="domain" description="VOC 2" evidence="2">
    <location>
        <begin position="151"/>
        <end position="303"/>
    </location>
</feature>
<feature type="binding site" evidence="1">
    <location>
        <position position="154"/>
    </location>
    <ligand>
        <name>Fe cation</name>
        <dbReference type="ChEBI" id="CHEBI:24875"/>
    </ligand>
</feature>
<feature type="binding site" evidence="1">
    <location>
        <position position="232"/>
    </location>
    <ligand>
        <name>Fe cation</name>
        <dbReference type="ChEBI" id="CHEBI:24875"/>
    </ligand>
</feature>
<feature type="binding site" evidence="1">
    <location>
        <position position="312"/>
    </location>
    <ligand>
        <name>Fe cation</name>
        <dbReference type="ChEBI" id="CHEBI:24875"/>
    </ligand>
</feature>
<feature type="sequence conflict" description="In Ref. 1; CAA04693." evidence="4" ref="1">
    <original>I</original>
    <variation>S</variation>
    <location>
        <position position="94"/>
    </location>
</feature>
<feature type="sequence conflict" description="In Ref. 1; CAA04693." evidence="4" ref="1">
    <original>S</original>
    <variation>P</variation>
    <location>
        <position position="141"/>
    </location>
</feature>
<feature type="sequence conflict" description="In Ref. 1; CAA04693." evidence="4" ref="1">
    <original>T</original>
    <variation>S</variation>
    <location>
        <position position="348"/>
    </location>
</feature>
<proteinExistence type="inferred from homology"/>
<gene>
    <name type="primary">lly</name>
    <name type="ordered locus">LPC_1747</name>
</gene>